<accession>B0SGE9</accession>
<protein>
    <recommendedName>
        <fullName evidence="1">Pyridoxine/pyridoxamine 5'-phosphate oxidase</fullName>
        <ecNumber evidence="1">1.4.3.5</ecNumber>
    </recommendedName>
    <alternativeName>
        <fullName evidence="1">PNP/PMP oxidase</fullName>
        <shortName evidence="1">PNPOx</shortName>
    </alternativeName>
    <alternativeName>
        <fullName evidence="1">Pyridoxal 5'-phosphate synthase</fullName>
    </alternativeName>
</protein>
<sequence length="212" mass="24621">MNDLAHMRTNYVRSVLSEETAGFDPLALFSLWFSEAKEEGELEPNAMSLSTVNTDGKPSVRIVLLKGLIRNEFQFFTNYSSHKGKDIEQNRNVALTFFWPKMERQIRIEGTVTKIPKEESEAYFKIRPRESQLGALTSNQSSVVVSREELETKFQTLEKEWEGKEIPMPESWGGYSVSPNKIEFWQGRAGRLHDRIVFERKNENWIRSRLSP</sequence>
<comment type="function">
    <text evidence="1">Catalyzes the oxidation of either pyridoxine 5'-phosphate (PNP) or pyridoxamine 5'-phosphate (PMP) into pyridoxal 5'-phosphate (PLP).</text>
</comment>
<comment type="catalytic activity">
    <reaction evidence="1">
        <text>pyridoxamine 5'-phosphate + O2 + H2O = pyridoxal 5'-phosphate + H2O2 + NH4(+)</text>
        <dbReference type="Rhea" id="RHEA:15817"/>
        <dbReference type="ChEBI" id="CHEBI:15377"/>
        <dbReference type="ChEBI" id="CHEBI:15379"/>
        <dbReference type="ChEBI" id="CHEBI:16240"/>
        <dbReference type="ChEBI" id="CHEBI:28938"/>
        <dbReference type="ChEBI" id="CHEBI:58451"/>
        <dbReference type="ChEBI" id="CHEBI:597326"/>
        <dbReference type="EC" id="1.4.3.5"/>
    </reaction>
</comment>
<comment type="catalytic activity">
    <reaction evidence="1">
        <text>pyridoxine 5'-phosphate + O2 = pyridoxal 5'-phosphate + H2O2</text>
        <dbReference type="Rhea" id="RHEA:15149"/>
        <dbReference type="ChEBI" id="CHEBI:15379"/>
        <dbReference type="ChEBI" id="CHEBI:16240"/>
        <dbReference type="ChEBI" id="CHEBI:58589"/>
        <dbReference type="ChEBI" id="CHEBI:597326"/>
        <dbReference type="EC" id="1.4.3.5"/>
    </reaction>
</comment>
<comment type="cofactor">
    <cofactor evidence="1">
        <name>FMN</name>
        <dbReference type="ChEBI" id="CHEBI:58210"/>
    </cofactor>
    <text evidence="1">Binds 1 FMN per subunit.</text>
</comment>
<comment type="pathway">
    <text evidence="1">Cofactor metabolism; pyridoxal 5'-phosphate salvage; pyridoxal 5'-phosphate from pyridoxamine 5'-phosphate: step 1/1.</text>
</comment>
<comment type="pathway">
    <text evidence="1">Cofactor metabolism; pyridoxal 5'-phosphate salvage; pyridoxal 5'-phosphate from pyridoxine 5'-phosphate: step 1/1.</text>
</comment>
<comment type="subunit">
    <text evidence="1">Homodimer.</text>
</comment>
<comment type="similarity">
    <text evidence="1">Belongs to the pyridoxamine 5'-phosphate oxidase family.</text>
</comment>
<gene>
    <name evidence="1" type="primary">pdxH</name>
    <name type="ordered locus">LBF_1353</name>
</gene>
<name>PDXH_LEPBA</name>
<dbReference type="EC" id="1.4.3.5" evidence="1"/>
<dbReference type="EMBL" id="CP000777">
    <property type="protein sequence ID" value="ABZ93873.1"/>
    <property type="molecule type" value="Genomic_DNA"/>
</dbReference>
<dbReference type="RefSeq" id="WP_012388396.1">
    <property type="nucleotide sequence ID" value="NC_010842.1"/>
</dbReference>
<dbReference type="SMR" id="B0SGE9"/>
<dbReference type="KEGG" id="lbf:LBF_1353"/>
<dbReference type="HOGENOM" id="CLU_032263_2_2_12"/>
<dbReference type="UniPathway" id="UPA01068">
    <property type="reaction ID" value="UER00304"/>
</dbReference>
<dbReference type="UniPathway" id="UPA01068">
    <property type="reaction ID" value="UER00305"/>
</dbReference>
<dbReference type="GO" id="GO:0010181">
    <property type="term" value="F:FMN binding"/>
    <property type="evidence" value="ECO:0007669"/>
    <property type="project" value="UniProtKB-UniRule"/>
</dbReference>
<dbReference type="GO" id="GO:0004733">
    <property type="term" value="F:pyridoxamine phosphate oxidase activity"/>
    <property type="evidence" value="ECO:0007669"/>
    <property type="project" value="UniProtKB-UniRule"/>
</dbReference>
<dbReference type="GO" id="GO:0008615">
    <property type="term" value="P:pyridoxine biosynthetic process"/>
    <property type="evidence" value="ECO:0007669"/>
    <property type="project" value="UniProtKB-KW"/>
</dbReference>
<dbReference type="FunFam" id="2.30.110.10:FF:000020">
    <property type="entry name" value="PNPO isoform 11"/>
    <property type="match status" value="1"/>
</dbReference>
<dbReference type="Gene3D" id="2.30.110.10">
    <property type="entry name" value="Electron Transport, Fmn-binding Protein, Chain A"/>
    <property type="match status" value="1"/>
</dbReference>
<dbReference type="HAMAP" id="MF_01629">
    <property type="entry name" value="PdxH"/>
    <property type="match status" value="1"/>
</dbReference>
<dbReference type="InterPro" id="IPR000659">
    <property type="entry name" value="Pyridox_Oxase"/>
</dbReference>
<dbReference type="InterPro" id="IPR019740">
    <property type="entry name" value="Pyridox_Oxase_CS"/>
</dbReference>
<dbReference type="InterPro" id="IPR011576">
    <property type="entry name" value="Pyridox_Oxase_N"/>
</dbReference>
<dbReference type="InterPro" id="IPR019576">
    <property type="entry name" value="Pyridoxamine_oxidase_dimer_C"/>
</dbReference>
<dbReference type="InterPro" id="IPR012349">
    <property type="entry name" value="Split_barrel_FMN-bd"/>
</dbReference>
<dbReference type="NCBIfam" id="TIGR00558">
    <property type="entry name" value="pdxH"/>
    <property type="match status" value="1"/>
</dbReference>
<dbReference type="NCBIfam" id="NF004231">
    <property type="entry name" value="PRK05679.1"/>
    <property type="match status" value="1"/>
</dbReference>
<dbReference type="PANTHER" id="PTHR10851:SF0">
    <property type="entry name" value="PYRIDOXINE-5'-PHOSPHATE OXIDASE"/>
    <property type="match status" value="1"/>
</dbReference>
<dbReference type="PANTHER" id="PTHR10851">
    <property type="entry name" value="PYRIDOXINE-5-PHOSPHATE OXIDASE"/>
    <property type="match status" value="1"/>
</dbReference>
<dbReference type="Pfam" id="PF10590">
    <property type="entry name" value="PNP_phzG_C"/>
    <property type="match status" value="1"/>
</dbReference>
<dbReference type="Pfam" id="PF01243">
    <property type="entry name" value="PNPOx_N"/>
    <property type="match status" value="1"/>
</dbReference>
<dbReference type="PIRSF" id="PIRSF000190">
    <property type="entry name" value="Pyd_amn-ph_oxd"/>
    <property type="match status" value="1"/>
</dbReference>
<dbReference type="SUPFAM" id="SSF50475">
    <property type="entry name" value="FMN-binding split barrel"/>
    <property type="match status" value="1"/>
</dbReference>
<dbReference type="PROSITE" id="PS01064">
    <property type="entry name" value="PYRIDOX_OXIDASE"/>
    <property type="match status" value="1"/>
</dbReference>
<keyword id="KW-0285">Flavoprotein</keyword>
<keyword id="KW-0288">FMN</keyword>
<keyword id="KW-0560">Oxidoreductase</keyword>
<keyword id="KW-0664">Pyridoxine biosynthesis</keyword>
<proteinExistence type="inferred from homology"/>
<reference key="1">
    <citation type="journal article" date="2008" name="PLoS ONE">
        <title>Genome sequence of the saprophyte Leptospira biflexa provides insights into the evolution of Leptospira and the pathogenesis of leptospirosis.</title>
        <authorList>
            <person name="Picardeau M."/>
            <person name="Bulach D.M."/>
            <person name="Bouchier C."/>
            <person name="Zuerner R.L."/>
            <person name="Zidane N."/>
            <person name="Wilson P.J."/>
            <person name="Creno S."/>
            <person name="Kuczek E.S."/>
            <person name="Bommezzadri S."/>
            <person name="Davis J.C."/>
            <person name="McGrath A."/>
            <person name="Johnson M.J."/>
            <person name="Boursaux-Eude C."/>
            <person name="Seemann T."/>
            <person name="Rouy Z."/>
            <person name="Coppel R.L."/>
            <person name="Rood J.I."/>
            <person name="Lajus A."/>
            <person name="Davies J.K."/>
            <person name="Medigue C."/>
            <person name="Adler B."/>
        </authorList>
    </citation>
    <scope>NUCLEOTIDE SEQUENCE [LARGE SCALE GENOMIC DNA]</scope>
    <source>
        <strain>Patoc 1 / Ames</strain>
    </source>
</reference>
<feature type="chain" id="PRO_0000335790" description="Pyridoxine/pyridoxamine 5'-phosphate oxidase">
    <location>
        <begin position="1"/>
        <end position="212"/>
    </location>
</feature>
<feature type="binding site" evidence="1">
    <location>
        <begin position="8"/>
        <end position="11"/>
    </location>
    <ligand>
        <name>substrate</name>
    </ligand>
</feature>
<feature type="binding site" evidence="1">
    <location>
        <begin position="61"/>
        <end position="66"/>
    </location>
    <ligand>
        <name>FMN</name>
        <dbReference type="ChEBI" id="CHEBI:58210"/>
    </ligand>
</feature>
<feature type="binding site" evidence="1">
    <location>
        <position position="66"/>
    </location>
    <ligand>
        <name>substrate</name>
    </ligand>
</feature>
<feature type="binding site" evidence="1">
    <location>
        <begin position="76"/>
        <end position="77"/>
    </location>
    <ligand>
        <name>FMN</name>
        <dbReference type="ChEBI" id="CHEBI:58210"/>
    </ligand>
</feature>
<feature type="binding site" evidence="1">
    <location>
        <position position="83"/>
    </location>
    <ligand>
        <name>FMN</name>
        <dbReference type="ChEBI" id="CHEBI:58210"/>
    </ligand>
</feature>
<feature type="binding site" evidence="1">
    <location>
        <position position="105"/>
    </location>
    <ligand>
        <name>FMN</name>
        <dbReference type="ChEBI" id="CHEBI:58210"/>
    </ligand>
</feature>
<feature type="binding site" evidence="1">
    <location>
        <position position="123"/>
    </location>
    <ligand>
        <name>substrate</name>
    </ligand>
</feature>
<feature type="binding site" evidence="1">
    <location>
        <position position="127"/>
    </location>
    <ligand>
        <name>substrate</name>
    </ligand>
</feature>
<feature type="binding site" evidence="1">
    <location>
        <position position="131"/>
    </location>
    <ligand>
        <name>substrate</name>
    </ligand>
</feature>
<feature type="binding site" evidence="1">
    <location>
        <begin position="140"/>
        <end position="141"/>
    </location>
    <ligand>
        <name>FMN</name>
        <dbReference type="ChEBI" id="CHEBI:58210"/>
    </ligand>
</feature>
<feature type="binding site" evidence="1">
    <location>
        <position position="185"/>
    </location>
    <ligand>
        <name>FMN</name>
        <dbReference type="ChEBI" id="CHEBI:58210"/>
    </ligand>
</feature>
<feature type="binding site" evidence="1">
    <location>
        <begin position="191"/>
        <end position="193"/>
    </location>
    <ligand>
        <name>substrate</name>
    </ligand>
</feature>
<feature type="binding site" evidence="1">
    <location>
        <position position="195"/>
    </location>
    <ligand>
        <name>FMN</name>
        <dbReference type="ChEBI" id="CHEBI:58210"/>
    </ligand>
</feature>
<organism>
    <name type="scientific">Leptospira biflexa serovar Patoc (strain Patoc 1 / Ames)</name>
    <dbReference type="NCBI Taxonomy" id="355278"/>
    <lineage>
        <taxon>Bacteria</taxon>
        <taxon>Pseudomonadati</taxon>
        <taxon>Spirochaetota</taxon>
        <taxon>Spirochaetia</taxon>
        <taxon>Leptospirales</taxon>
        <taxon>Leptospiraceae</taxon>
        <taxon>Leptospira</taxon>
    </lineage>
</organism>
<evidence type="ECO:0000255" key="1">
    <source>
        <dbReference type="HAMAP-Rule" id="MF_01629"/>
    </source>
</evidence>